<reference key="1">
    <citation type="submission" date="2009-06" db="EMBL/GenBank/DDBJ databases">
        <title>Complete sequence of Desulfovibrio salexigens DSM 2638.</title>
        <authorList>
            <consortium name="US DOE Joint Genome Institute"/>
            <person name="Lucas S."/>
            <person name="Copeland A."/>
            <person name="Lapidus A."/>
            <person name="Glavina del Rio T."/>
            <person name="Tice H."/>
            <person name="Bruce D."/>
            <person name="Goodwin L."/>
            <person name="Pitluck S."/>
            <person name="Munk A.C."/>
            <person name="Brettin T."/>
            <person name="Detter J.C."/>
            <person name="Han C."/>
            <person name="Tapia R."/>
            <person name="Larimer F."/>
            <person name="Land M."/>
            <person name="Hauser L."/>
            <person name="Kyrpides N."/>
            <person name="Anderson I."/>
            <person name="Wall J.D."/>
            <person name="Arkin A.P."/>
            <person name="Dehal P."/>
            <person name="Chivian D."/>
            <person name="Giles B."/>
            <person name="Hazen T.C."/>
        </authorList>
    </citation>
    <scope>NUCLEOTIDE SEQUENCE [LARGE SCALE GENOMIC DNA]</scope>
    <source>
        <strain>ATCC 14822 / DSM 2638 / NCIMB 8403 / VKM B-1763</strain>
    </source>
</reference>
<gene>
    <name evidence="1" type="primary">proB</name>
    <name type="ordered locus">Desal_0851</name>
</gene>
<feature type="chain" id="PRO_1000206268" description="Glutamate 5-kinase">
    <location>
        <begin position="1"/>
        <end position="377"/>
    </location>
</feature>
<feature type="domain" description="PUA" evidence="1">
    <location>
        <begin position="282"/>
        <end position="360"/>
    </location>
</feature>
<feature type="binding site" evidence="1">
    <location>
        <position position="17"/>
    </location>
    <ligand>
        <name>ATP</name>
        <dbReference type="ChEBI" id="CHEBI:30616"/>
    </ligand>
</feature>
<feature type="binding site" evidence="1">
    <location>
        <position position="56"/>
    </location>
    <ligand>
        <name>substrate</name>
    </ligand>
</feature>
<feature type="binding site" evidence="1">
    <location>
        <position position="143"/>
    </location>
    <ligand>
        <name>substrate</name>
    </ligand>
</feature>
<feature type="binding site" evidence="1">
    <location>
        <position position="155"/>
    </location>
    <ligand>
        <name>substrate</name>
    </ligand>
</feature>
<feature type="binding site" evidence="1">
    <location>
        <begin position="217"/>
        <end position="223"/>
    </location>
    <ligand>
        <name>ATP</name>
        <dbReference type="ChEBI" id="CHEBI:30616"/>
    </ligand>
</feature>
<keyword id="KW-0028">Amino-acid biosynthesis</keyword>
<keyword id="KW-0067">ATP-binding</keyword>
<keyword id="KW-0963">Cytoplasm</keyword>
<keyword id="KW-0418">Kinase</keyword>
<keyword id="KW-0547">Nucleotide-binding</keyword>
<keyword id="KW-0641">Proline biosynthesis</keyword>
<keyword id="KW-1185">Reference proteome</keyword>
<keyword id="KW-0808">Transferase</keyword>
<organism>
    <name type="scientific">Maridesulfovibrio salexigens (strain ATCC 14822 / DSM 2638 / NCIMB 8403 / VKM B-1763)</name>
    <name type="common">Desulfovibrio salexigens</name>
    <dbReference type="NCBI Taxonomy" id="526222"/>
    <lineage>
        <taxon>Bacteria</taxon>
        <taxon>Pseudomonadati</taxon>
        <taxon>Thermodesulfobacteriota</taxon>
        <taxon>Desulfovibrionia</taxon>
        <taxon>Desulfovibrionales</taxon>
        <taxon>Desulfovibrionaceae</taxon>
        <taxon>Maridesulfovibrio</taxon>
    </lineage>
</organism>
<evidence type="ECO:0000255" key="1">
    <source>
        <dbReference type="HAMAP-Rule" id="MF_00456"/>
    </source>
</evidence>
<comment type="function">
    <text evidence="1">Catalyzes the transfer of a phosphate group to glutamate to form L-glutamate 5-phosphate.</text>
</comment>
<comment type="catalytic activity">
    <reaction evidence="1">
        <text>L-glutamate + ATP = L-glutamyl 5-phosphate + ADP</text>
        <dbReference type="Rhea" id="RHEA:14877"/>
        <dbReference type="ChEBI" id="CHEBI:29985"/>
        <dbReference type="ChEBI" id="CHEBI:30616"/>
        <dbReference type="ChEBI" id="CHEBI:58274"/>
        <dbReference type="ChEBI" id="CHEBI:456216"/>
        <dbReference type="EC" id="2.7.2.11"/>
    </reaction>
</comment>
<comment type="pathway">
    <text evidence="1">Amino-acid biosynthesis; L-proline biosynthesis; L-glutamate 5-semialdehyde from L-glutamate: step 1/2.</text>
</comment>
<comment type="subcellular location">
    <subcellularLocation>
        <location evidence="1">Cytoplasm</location>
    </subcellularLocation>
</comment>
<comment type="similarity">
    <text evidence="1">Belongs to the glutamate 5-kinase family.</text>
</comment>
<dbReference type="EC" id="2.7.2.11" evidence="1"/>
<dbReference type="EMBL" id="CP001649">
    <property type="protein sequence ID" value="ACS78917.1"/>
    <property type="molecule type" value="Genomic_DNA"/>
</dbReference>
<dbReference type="RefSeq" id="WP_015850736.1">
    <property type="nucleotide sequence ID" value="NC_012881.1"/>
</dbReference>
<dbReference type="SMR" id="C6BZ93"/>
<dbReference type="STRING" id="526222.Desal_0851"/>
<dbReference type="KEGG" id="dsa:Desal_0851"/>
<dbReference type="eggNOG" id="COG0263">
    <property type="taxonomic scope" value="Bacteria"/>
</dbReference>
<dbReference type="HOGENOM" id="CLU_025400_2_0_7"/>
<dbReference type="OrthoDB" id="9804434at2"/>
<dbReference type="UniPathway" id="UPA00098">
    <property type="reaction ID" value="UER00359"/>
</dbReference>
<dbReference type="Proteomes" id="UP000002601">
    <property type="component" value="Chromosome"/>
</dbReference>
<dbReference type="GO" id="GO:0005829">
    <property type="term" value="C:cytosol"/>
    <property type="evidence" value="ECO:0007669"/>
    <property type="project" value="TreeGrafter"/>
</dbReference>
<dbReference type="GO" id="GO:0005524">
    <property type="term" value="F:ATP binding"/>
    <property type="evidence" value="ECO:0007669"/>
    <property type="project" value="UniProtKB-KW"/>
</dbReference>
<dbReference type="GO" id="GO:0004349">
    <property type="term" value="F:glutamate 5-kinase activity"/>
    <property type="evidence" value="ECO:0007669"/>
    <property type="project" value="UniProtKB-UniRule"/>
</dbReference>
<dbReference type="GO" id="GO:0003723">
    <property type="term" value="F:RNA binding"/>
    <property type="evidence" value="ECO:0007669"/>
    <property type="project" value="InterPro"/>
</dbReference>
<dbReference type="GO" id="GO:0055129">
    <property type="term" value="P:L-proline biosynthetic process"/>
    <property type="evidence" value="ECO:0007669"/>
    <property type="project" value="UniProtKB-UniRule"/>
</dbReference>
<dbReference type="CDD" id="cd04242">
    <property type="entry name" value="AAK_G5K_ProB"/>
    <property type="match status" value="1"/>
</dbReference>
<dbReference type="CDD" id="cd21157">
    <property type="entry name" value="PUA_G5K"/>
    <property type="match status" value="1"/>
</dbReference>
<dbReference type="FunFam" id="3.40.1160.10:FF:000018">
    <property type="entry name" value="Glutamate 5-kinase"/>
    <property type="match status" value="1"/>
</dbReference>
<dbReference type="Gene3D" id="3.40.1160.10">
    <property type="entry name" value="Acetylglutamate kinase-like"/>
    <property type="match status" value="2"/>
</dbReference>
<dbReference type="Gene3D" id="2.30.130.10">
    <property type="entry name" value="PUA domain"/>
    <property type="match status" value="1"/>
</dbReference>
<dbReference type="HAMAP" id="MF_00456">
    <property type="entry name" value="ProB"/>
    <property type="match status" value="1"/>
</dbReference>
<dbReference type="InterPro" id="IPR036393">
    <property type="entry name" value="AceGlu_kinase-like_sf"/>
</dbReference>
<dbReference type="InterPro" id="IPR001048">
    <property type="entry name" value="Asp/Glu/Uridylate_kinase"/>
</dbReference>
<dbReference type="InterPro" id="IPR041739">
    <property type="entry name" value="G5K_ProB"/>
</dbReference>
<dbReference type="InterPro" id="IPR001057">
    <property type="entry name" value="Glu/AcGlu_kinase"/>
</dbReference>
<dbReference type="InterPro" id="IPR011529">
    <property type="entry name" value="Glu_5kinase"/>
</dbReference>
<dbReference type="InterPro" id="IPR005715">
    <property type="entry name" value="Glu_5kinase/COase_Synthase"/>
</dbReference>
<dbReference type="InterPro" id="IPR019797">
    <property type="entry name" value="Glutamate_5-kinase_CS"/>
</dbReference>
<dbReference type="InterPro" id="IPR002478">
    <property type="entry name" value="PUA"/>
</dbReference>
<dbReference type="InterPro" id="IPR015947">
    <property type="entry name" value="PUA-like_sf"/>
</dbReference>
<dbReference type="InterPro" id="IPR036974">
    <property type="entry name" value="PUA_sf"/>
</dbReference>
<dbReference type="NCBIfam" id="TIGR01027">
    <property type="entry name" value="proB"/>
    <property type="match status" value="1"/>
</dbReference>
<dbReference type="PANTHER" id="PTHR43654">
    <property type="entry name" value="GLUTAMATE 5-KINASE"/>
    <property type="match status" value="1"/>
</dbReference>
<dbReference type="PANTHER" id="PTHR43654:SF1">
    <property type="entry name" value="ISOPENTENYL PHOSPHATE KINASE"/>
    <property type="match status" value="1"/>
</dbReference>
<dbReference type="Pfam" id="PF00696">
    <property type="entry name" value="AA_kinase"/>
    <property type="match status" value="1"/>
</dbReference>
<dbReference type="Pfam" id="PF01472">
    <property type="entry name" value="PUA"/>
    <property type="match status" value="1"/>
</dbReference>
<dbReference type="PIRSF" id="PIRSF000729">
    <property type="entry name" value="GK"/>
    <property type="match status" value="1"/>
</dbReference>
<dbReference type="PRINTS" id="PR00474">
    <property type="entry name" value="GLU5KINASE"/>
</dbReference>
<dbReference type="SMART" id="SM00359">
    <property type="entry name" value="PUA"/>
    <property type="match status" value="1"/>
</dbReference>
<dbReference type="SUPFAM" id="SSF53633">
    <property type="entry name" value="Carbamate kinase-like"/>
    <property type="match status" value="1"/>
</dbReference>
<dbReference type="SUPFAM" id="SSF88697">
    <property type="entry name" value="PUA domain-like"/>
    <property type="match status" value="1"/>
</dbReference>
<dbReference type="PROSITE" id="PS00902">
    <property type="entry name" value="GLUTAMATE_5_KINASE"/>
    <property type="match status" value="1"/>
</dbReference>
<dbReference type="PROSITE" id="PS50890">
    <property type="entry name" value="PUA"/>
    <property type="match status" value="1"/>
</dbReference>
<name>PROB_MARSD</name>
<protein>
    <recommendedName>
        <fullName evidence="1">Glutamate 5-kinase</fullName>
        <ecNumber evidence="1">2.7.2.11</ecNumber>
    </recommendedName>
    <alternativeName>
        <fullName evidence="1">Gamma-glutamyl kinase</fullName>
        <shortName evidence="1">GK</shortName>
    </alternativeName>
</protein>
<sequence length="377" mass="40973">MSNRIQTLKEAKRIVVKIGSAVLTTAEGINLGLICRLADQLATLHERGVDIVLVSSGAVAAGRNSIPSGAKLDDLPARQAASAIGQSRLMHEYDETFRRFGLVTSQVLLTRDDLKHRDRFLNARNTLSRLLEWRVIPIINENDTVAVQELEFGDNDTLASLILNVVEADLFINLTSADGVFDKNPDKNPDAKPLACIENIHDLDLDAMCDGKTAVGSGGMFSKMRAANRAAQLGVPTLILAGKDRMIIERIFNGEERGTWIVPDEKSVSRRKYWLAYHCDPAGDLVIDDGAQKALLSGGKSLLPAGIIEVDGKFKAGELVRVVNKEGKSLAVGLSCYNSTDIIKIMGCKSCEIESILGKCPYPEAIHRDNLLLDAAL</sequence>
<proteinExistence type="inferred from homology"/>
<accession>C6BZ93</accession>